<name>SCAM4_ARATH</name>
<protein>
    <recommendedName>
        <fullName>Secretory carrier-associated membrane protein 4</fullName>
        <shortName>Secretory carrier membrane protein 4</shortName>
    </recommendedName>
</protein>
<keyword id="KW-1003">Cell membrane</keyword>
<keyword id="KW-0175">Coiled coil</keyword>
<keyword id="KW-0968">Cytoplasmic vesicle</keyword>
<keyword id="KW-0472">Membrane</keyword>
<keyword id="KW-1185">Reference proteome</keyword>
<keyword id="KW-0812">Transmembrane</keyword>
<keyword id="KW-1133">Transmembrane helix</keyword>
<keyword id="KW-0813">Transport</keyword>
<sequence>MNRHHDPNPFDEDEEIVNPFSKGGGRVPAASRPVEYGQSLDATVDIPLDNMNDSSQKQRKLADWEAELRKKEMDIKRREEAIAKFGVQIDDKNWPPFFPIIHHDIAKEIPVHAQKLQYLAFASWLGIVLCLVFNVIATMVCWIKGGGVKIFFLATIYALIGCPLSYVLWYRPLYRAMRTDSALKFGWFFFTYLIHIGFCIVAAIAPPIFFHGKSLTGVLAAIDVISDSLLAGIFYFIGFGLFCLESLLSLWVLQKIYLYFRGNK</sequence>
<evidence type="ECO:0000250" key="1"/>
<evidence type="ECO:0000255" key="2"/>
<evidence type="ECO:0000256" key="3">
    <source>
        <dbReference type="SAM" id="MobiDB-lite"/>
    </source>
</evidence>
<evidence type="ECO:0000269" key="4">
    <source>
    </source>
</evidence>
<evidence type="ECO:0000305" key="5"/>
<organism>
    <name type="scientific">Arabidopsis thaliana</name>
    <name type="common">Mouse-ear cress</name>
    <dbReference type="NCBI Taxonomy" id="3702"/>
    <lineage>
        <taxon>Eukaryota</taxon>
        <taxon>Viridiplantae</taxon>
        <taxon>Streptophyta</taxon>
        <taxon>Embryophyta</taxon>
        <taxon>Tracheophyta</taxon>
        <taxon>Spermatophyta</taxon>
        <taxon>Magnoliopsida</taxon>
        <taxon>eudicotyledons</taxon>
        <taxon>Gunneridae</taxon>
        <taxon>Pentapetalae</taxon>
        <taxon>rosids</taxon>
        <taxon>malvids</taxon>
        <taxon>Brassicales</taxon>
        <taxon>Brassicaceae</taxon>
        <taxon>Camelineae</taxon>
        <taxon>Arabidopsis</taxon>
    </lineage>
</organism>
<feature type="chain" id="PRO_0000304903" description="Secretory carrier-associated membrane protein 4">
    <location>
        <begin position="1"/>
        <end position="264"/>
    </location>
</feature>
<feature type="topological domain" description="Cytoplasmic" evidence="2">
    <location>
        <begin position="1"/>
        <end position="122"/>
    </location>
</feature>
<feature type="transmembrane region" description="Helical" evidence="2">
    <location>
        <begin position="123"/>
        <end position="143"/>
    </location>
</feature>
<feature type="transmembrane region" description="Helical" evidence="2">
    <location>
        <begin position="150"/>
        <end position="170"/>
    </location>
</feature>
<feature type="transmembrane region" description="Helical" evidence="2">
    <location>
        <begin position="185"/>
        <end position="205"/>
    </location>
</feature>
<feature type="transmembrane region" description="Helical" evidence="2">
    <location>
        <begin position="233"/>
        <end position="253"/>
    </location>
</feature>
<feature type="topological domain" description="Cytoplasmic" evidence="2">
    <location>
        <begin position="254"/>
        <end position="264"/>
    </location>
</feature>
<feature type="region of interest" description="Disordered" evidence="3">
    <location>
        <begin position="1"/>
        <end position="33"/>
    </location>
</feature>
<feature type="coiled-coil region" evidence="2">
    <location>
        <begin position="51"/>
        <end position="85"/>
    </location>
</feature>
<dbReference type="EMBL" id="AC074309">
    <property type="protein sequence ID" value="AAG50798.1"/>
    <property type="molecule type" value="Genomic_DNA"/>
</dbReference>
<dbReference type="EMBL" id="CP002684">
    <property type="protein sequence ID" value="AEE31429.1"/>
    <property type="molecule type" value="Genomic_DNA"/>
</dbReference>
<dbReference type="EMBL" id="AY087388">
    <property type="protein sequence ID" value="AAM64938.1"/>
    <property type="molecule type" value="mRNA"/>
</dbReference>
<dbReference type="EMBL" id="AK226594">
    <property type="protein sequence ID" value="BAE98709.1"/>
    <property type="molecule type" value="mRNA"/>
</dbReference>
<dbReference type="EMBL" id="BT025793">
    <property type="protein sequence ID" value="ABF83683.1"/>
    <property type="molecule type" value="mRNA"/>
</dbReference>
<dbReference type="PIR" id="G86444">
    <property type="entry name" value="G86444"/>
</dbReference>
<dbReference type="SMR" id="Q9C6X2"/>
<dbReference type="BioGRID" id="25331">
    <property type="interactions" value="1"/>
</dbReference>
<dbReference type="FunCoup" id="Q9C6X2">
    <property type="interactions" value="3445"/>
</dbReference>
<dbReference type="STRING" id="3702.Q9C6X2"/>
<dbReference type="iPTMnet" id="Q9C6X2"/>
<dbReference type="PaxDb" id="3702-AT1G32050.1"/>
<dbReference type="ProteomicsDB" id="232763"/>
<dbReference type="EnsemblPlants" id="AT1G32050.1">
    <property type="protein sequence ID" value="AT1G32050.1"/>
    <property type="gene ID" value="AT1G32050"/>
</dbReference>
<dbReference type="GeneID" id="840097"/>
<dbReference type="Gramene" id="AT1G32050.1">
    <property type="protein sequence ID" value="AT1G32050.1"/>
    <property type="gene ID" value="AT1G32050"/>
</dbReference>
<dbReference type="KEGG" id="ath:AT1G32050"/>
<dbReference type="Araport" id="AT1G32050"/>
<dbReference type="TAIR" id="AT1G32050">
    <property type="gene designation" value="SCAMP5"/>
</dbReference>
<dbReference type="eggNOG" id="KOG3088">
    <property type="taxonomic scope" value="Eukaryota"/>
</dbReference>
<dbReference type="HOGENOM" id="CLU_066546_3_0_1"/>
<dbReference type="InParanoid" id="Q9C6X2"/>
<dbReference type="OMA" id="TWPVGWI"/>
<dbReference type="PhylomeDB" id="Q9C6X2"/>
<dbReference type="PRO" id="PR:Q9C6X2"/>
<dbReference type="Proteomes" id="UP000006548">
    <property type="component" value="Chromosome 1"/>
</dbReference>
<dbReference type="ExpressionAtlas" id="Q9C6X2">
    <property type="expression patterns" value="baseline and differential"/>
</dbReference>
<dbReference type="GO" id="GO:0005794">
    <property type="term" value="C:Golgi apparatus"/>
    <property type="evidence" value="ECO:0007005"/>
    <property type="project" value="TAIR"/>
</dbReference>
<dbReference type="GO" id="GO:0005739">
    <property type="term" value="C:mitochondrion"/>
    <property type="evidence" value="ECO:0007005"/>
    <property type="project" value="TAIR"/>
</dbReference>
<dbReference type="GO" id="GO:0005634">
    <property type="term" value="C:nucleus"/>
    <property type="evidence" value="ECO:0007005"/>
    <property type="project" value="TAIR"/>
</dbReference>
<dbReference type="GO" id="GO:0005886">
    <property type="term" value="C:plasma membrane"/>
    <property type="evidence" value="ECO:0007005"/>
    <property type="project" value="TAIR"/>
</dbReference>
<dbReference type="GO" id="GO:0030658">
    <property type="term" value="C:transport vesicle membrane"/>
    <property type="evidence" value="ECO:0007669"/>
    <property type="project" value="UniProtKB-SubCell"/>
</dbReference>
<dbReference type="GO" id="GO:0015031">
    <property type="term" value="P:protein transport"/>
    <property type="evidence" value="ECO:0007669"/>
    <property type="project" value="InterPro"/>
</dbReference>
<dbReference type="InterPro" id="IPR007273">
    <property type="entry name" value="SCAMP"/>
</dbReference>
<dbReference type="PANTHER" id="PTHR10687:SF2">
    <property type="entry name" value="SECRETORY CARRIER-ASSOCIATED MEMBRANE PROTEIN"/>
    <property type="match status" value="1"/>
</dbReference>
<dbReference type="PANTHER" id="PTHR10687">
    <property type="entry name" value="SECRETORY CARRIER-ASSOCIATED MEMBRANE PROTEIN SCAMP"/>
    <property type="match status" value="1"/>
</dbReference>
<dbReference type="Pfam" id="PF04144">
    <property type="entry name" value="SCAMP"/>
    <property type="match status" value="1"/>
</dbReference>
<proteinExistence type="evidence at protein level"/>
<gene>
    <name type="primary">SCAMP4</name>
    <name type="ordered locus">At1g32050</name>
    <name type="ORF">T12O21.5</name>
</gene>
<accession>Q9C6X2</accession>
<comment type="function">
    <text evidence="1">Probably involved in membrane trafficking.</text>
</comment>
<comment type="subcellular location">
    <subcellularLocation>
        <location evidence="4">Cell membrane</location>
        <topology evidence="2">Multi-pass membrane protein</topology>
    </subcellularLocation>
    <subcellularLocation>
        <location evidence="1">Cytoplasmic vesicle</location>
        <location evidence="1">Secretory vesicle membrane</location>
        <topology evidence="1">Multi-pass membrane protein</topology>
    </subcellularLocation>
</comment>
<comment type="similarity">
    <text evidence="5">Belongs to the SCAMP family.</text>
</comment>
<reference key="1">
    <citation type="journal article" date="2000" name="Nature">
        <title>Sequence and analysis of chromosome 1 of the plant Arabidopsis thaliana.</title>
        <authorList>
            <person name="Theologis A."/>
            <person name="Ecker J.R."/>
            <person name="Palm C.J."/>
            <person name="Federspiel N.A."/>
            <person name="Kaul S."/>
            <person name="White O."/>
            <person name="Alonso J."/>
            <person name="Altafi H."/>
            <person name="Araujo R."/>
            <person name="Bowman C.L."/>
            <person name="Brooks S.Y."/>
            <person name="Buehler E."/>
            <person name="Chan A."/>
            <person name="Chao Q."/>
            <person name="Chen H."/>
            <person name="Cheuk R.F."/>
            <person name="Chin C.W."/>
            <person name="Chung M.K."/>
            <person name="Conn L."/>
            <person name="Conway A.B."/>
            <person name="Conway A.R."/>
            <person name="Creasy T.H."/>
            <person name="Dewar K."/>
            <person name="Dunn P."/>
            <person name="Etgu P."/>
            <person name="Feldblyum T.V."/>
            <person name="Feng J.-D."/>
            <person name="Fong B."/>
            <person name="Fujii C.Y."/>
            <person name="Gill J.E."/>
            <person name="Goldsmith A.D."/>
            <person name="Haas B."/>
            <person name="Hansen N.F."/>
            <person name="Hughes B."/>
            <person name="Huizar L."/>
            <person name="Hunter J.L."/>
            <person name="Jenkins J."/>
            <person name="Johnson-Hopson C."/>
            <person name="Khan S."/>
            <person name="Khaykin E."/>
            <person name="Kim C.J."/>
            <person name="Koo H.L."/>
            <person name="Kremenetskaia I."/>
            <person name="Kurtz D.B."/>
            <person name="Kwan A."/>
            <person name="Lam B."/>
            <person name="Langin-Hooper S."/>
            <person name="Lee A."/>
            <person name="Lee J.M."/>
            <person name="Lenz C.A."/>
            <person name="Li J.H."/>
            <person name="Li Y.-P."/>
            <person name="Lin X."/>
            <person name="Liu S.X."/>
            <person name="Liu Z.A."/>
            <person name="Luros J.S."/>
            <person name="Maiti R."/>
            <person name="Marziali A."/>
            <person name="Militscher J."/>
            <person name="Miranda M."/>
            <person name="Nguyen M."/>
            <person name="Nierman W.C."/>
            <person name="Osborne B.I."/>
            <person name="Pai G."/>
            <person name="Peterson J."/>
            <person name="Pham P.K."/>
            <person name="Rizzo M."/>
            <person name="Rooney T."/>
            <person name="Rowley D."/>
            <person name="Sakano H."/>
            <person name="Salzberg S.L."/>
            <person name="Schwartz J.R."/>
            <person name="Shinn P."/>
            <person name="Southwick A.M."/>
            <person name="Sun H."/>
            <person name="Tallon L.J."/>
            <person name="Tambunga G."/>
            <person name="Toriumi M.J."/>
            <person name="Town C.D."/>
            <person name="Utterback T."/>
            <person name="Van Aken S."/>
            <person name="Vaysberg M."/>
            <person name="Vysotskaia V.S."/>
            <person name="Walker M."/>
            <person name="Wu D."/>
            <person name="Yu G."/>
            <person name="Fraser C.M."/>
            <person name="Venter J.C."/>
            <person name="Davis R.W."/>
        </authorList>
    </citation>
    <scope>NUCLEOTIDE SEQUENCE [LARGE SCALE GENOMIC DNA]</scope>
    <source>
        <strain>cv. Columbia</strain>
    </source>
</reference>
<reference key="2">
    <citation type="journal article" date="2017" name="Plant J.">
        <title>Araport11: a complete reannotation of the Arabidopsis thaliana reference genome.</title>
        <authorList>
            <person name="Cheng C.Y."/>
            <person name="Krishnakumar V."/>
            <person name="Chan A.P."/>
            <person name="Thibaud-Nissen F."/>
            <person name="Schobel S."/>
            <person name="Town C.D."/>
        </authorList>
    </citation>
    <scope>GENOME REANNOTATION</scope>
    <source>
        <strain>cv. Columbia</strain>
    </source>
</reference>
<reference key="3">
    <citation type="submission" date="2002-03" db="EMBL/GenBank/DDBJ databases">
        <title>Full-length cDNA from Arabidopsis thaliana.</title>
        <authorList>
            <person name="Brover V.V."/>
            <person name="Troukhan M.E."/>
            <person name="Alexandrov N.A."/>
            <person name="Lu Y.-P."/>
            <person name="Flavell R.B."/>
            <person name="Feldmann K.A."/>
        </authorList>
    </citation>
    <scope>NUCLEOTIDE SEQUENCE [LARGE SCALE MRNA]</scope>
</reference>
<reference key="4">
    <citation type="submission" date="2006-07" db="EMBL/GenBank/DDBJ databases">
        <title>Large-scale analysis of RIKEN Arabidopsis full-length (RAFL) cDNAs.</title>
        <authorList>
            <person name="Totoki Y."/>
            <person name="Seki M."/>
            <person name="Ishida J."/>
            <person name="Nakajima M."/>
            <person name="Enju A."/>
            <person name="Kamiya A."/>
            <person name="Narusaka M."/>
            <person name="Shin-i T."/>
            <person name="Nakagawa M."/>
            <person name="Sakamoto N."/>
            <person name="Oishi K."/>
            <person name="Kohara Y."/>
            <person name="Kobayashi M."/>
            <person name="Toyoda A."/>
            <person name="Sakaki Y."/>
            <person name="Sakurai T."/>
            <person name="Iida K."/>
            <person name="Akiyama K."/>
            <person name="Satou M."/>
            <person name="Toyoda T."/>
            <person name="Konagaya A."/>
            <person name="Carninci P."/>
            <person name="Kawai J."/>
            <person name="Hayashizaki Y."/>
            <person name="Shinozaki K."/>
        </authorList>
    </citation>
    <scope>NUCLEOTIDE SEQUENCE [LARGE SCALE MRNA]</scope>
    <source>
        <strain>cv. Columbia</strain>
    </source>
</reference>
<reference key="5">
    <citation type="submission" date="2006-06" db="EMBL/GenBank/DDBJ databases">
        <title>Arabidopsis ORF clones.</title>
        <authorList>
            <person name="Kim C.J."/>
            <person name="Chen H."/>
            <person name="Quinitio C."/>
            <person name="Shinn P."/>
            <person name="Ecker J.R."/>
        </authorList>
    </citation>
    <scope>NUCLEOTIDE SEQUENCE [LARGE SCALE MRNA]</scope>
    <source>
        <strain>cv. Columbia</strain>
    </source>
</reference>
<reference key="6">
    <citation type="journal article" date="2004" name="Mol. Cell. Proteomics">
        <title>Identification of new intrinsic proteins in Arabidopsis plasma membrane proteome.</title>
        <authorList>
            <person name="Marmagne A."/>
            <person name="Rouet M.-A."/>
            <person name="Ferro M."/>
            <person name="Rolland N."/>
            <person name="Alcon C."/>
            <person name="Joyard J."/>
            <person name="Garin J."/>
            <person name="Barbier-Brygoo H."/>
            <person name="Ephritikhine G."/>
        </authorList>
    </citation>
    <scope>IDENTIFICATION BY MASS SPECTROMETRY</scope>
    <scope>SUBCELLULAR LOCATION [LARGE SCALE ANALYSIS]</scope>
</reference>